<comment type="function">
    <text evidence="1">Involved in base excision repair of DNA damaged by oxidation or by mutagenic agents. Acts as a DNA glycosylase that recognizes and removes damaged bases. Has a preference for oxidized purines, such as 7,8-dihydro-8-oxoguanine (8-oxoG). Has AP (apurinic/apyrimidinic) lyase activity and introduces nicks in the DNA strand. Cleaves the DNA backbone by beta-delta elimination to generate a single-strand break at the site of the removed base with both 3'- and 5'-phosphates (By similarity).</text>
</comment>
<comment type="catalytic activity">
    <reaction>
        <text>Hydrolysis of DNA containing ring-opened 7-methylguanine residues, releasing 2,6-diamino-4-hydroxy-5-(N-methyl)formamidopyrimidine.</text>
        <dbReference type="EC" id="3.2.2.23"/>
    </reaction>
</comment>
<comment type="catalytic activity">
    <reaction>
        <text>2'-deoxyribonucleotide-(2'-deoxyribose 5'-phosphate)-2'-deoxyribonucleotide-DNA = a 3'-end 2'-deoxyribonucleotide-(2,3-dehydro-2,3-deoxyribose 5'-phosphate)-DNA + a 5'-end 5'-phospho-2'-deoxyribonucleoside-DNA + H(+)</text>
        <dbReference type="Rhea" id="RHEA:66592"/>
        <dbReference type="Rhea" id="RHEA-COMP:13180"/>
        <dbReference type="Rhea" id="RHEA-COMP:16897"/>
        <dbReference type="Rhea" id="RHEA-COMP:17067"/>
        <dbReference type="ChEBI" id="CHEBI:15378"/>
        <dbReference type="ChEBI" id="CHEBI:136412"/>
        <dbReference type="ChEBI" id="CHEBI:157695"/>
        <dbReference type="ChEBI" id="CHEBI:167181"/>
        <dbReference type="EC" id="4.2.99.18"/>
    </reaction>
</comment>
<comment type="cofactor">
    <cofactor evidence="1">
        <name>Zn(2+)</name>
        <dbReference type="ChEBI" id="CHEBI:29105"/>
    </cofactor>
    <text evidence="1">Binds 1 zinc ion per subunit.</text>
</comment>
<comment type="subunit">
    <text evidence="1">Monomer.</text>
</comment>
<comment type="similarity">
    <text evidence="2">Belongs to the FPG family.</text>
</comment>
<keyword id="KW-0227">DNA damage</keyword>
<keyword id="KW-0234">DNA repair</keyword>
<keyword id="KW-0238">DNA-binding</keyword>
<keyword id="KW-0326">Glycosidase</keyword>
<keyword id="KW-0378">Hydrolase</keyword>
<keyword id="KW-0456">Lyase</keyword>
<keyword id="KW-0479">Metal-binding</keyword>
<keyword id="KW-0511">Multifunctional enzyme</keyword>
<keyword id="KW-1185">Reference proteome</keyword>
<keyword id="KW-0862">Zinc</keyword>
<keyword id="KW-0863">Zinc-finger</keyword>
<name>FPG_MYCPN</name>
<reference key="1">
    <citation type="journal article" date="1996" name="Nucleic Acids Res.">
        <title>Complete sequence analysis of the genome of the bacterium Mycoplasma pneumoniae.</title>
        <authorList>
            <person name="Himmelreich R."/>
            <person name="Hilbert H."/>
            <person name="Plagens H."/>
            <person name="Pirkl E."/>
            <person name="Li B.-C."/>
            <person name="Herrmann R."/>
        </authorList>
    </citation>
    <scope>NUCLEOTIDE SEQUENCE [LARGE SCALE GENOMIC DNA]</scope>
    <source>
        <strain>ATCC 29342 / M129 / Subtype 1</strain>
    </source>
</reference>
<accession>P75402</accession>
<organism>
    <name type="scientific">Mycoplasma pneumoniae (strain ATCC 29342 / M129 / Subtype 1)</name>
    <name type="common">Mycoplasmoides pneumoniae</name>
    <dbReference type="NCBI Taxonomy" id="272634"/>
    <lineage>
        <taxon>Bacteria</taxon>
        <taxon>Bacillati</taxon>
        <taxon>Mycoplasmatota</taxon>
        <taxon>Mycoplasmoidales</taxon>
        <taxon>Mycoplasmoidaceae</taxon>
        <taxon>Mycoplasmoides</taxon>
    </lineage>
</organism>
<sequence length="277" mass="31855">MPELPEVATVITELKSCVLNKPVKQVKVHLDKVLKNTNVKQLNDALVNHSFVDIKRRGKYIIFCLSNGLFLVSHLRMEGKYFFEAKGSQFDLNHVLVEFLFQDGDQLNYHDTRQFGTFHLFNRYQFENARELNKLALDPLDQEFNHQAIFNKGHKSNKKIKTFILDQTNISGIGNIYADEILFASKIHPETLAKNLNLSQYQLICQNATDILKKAVEMKGTTIGTFTFKKDHTGGYQHFLKIHGKKGKQCQSCNTTIIKKKINGRGSYICEKCQIQR</sequence>
<proteinExistence type="inferred from homology"/>
<gene>
    <name type="primary">mutM</name>
    <name type="synonym">fpg</name>
    <name type="ordered locus">MPN_380</name>
    <name type="ORF">MP457</name>
</gene>
<feature type="initiator methionine" description="Removed" evidence="1">
    <location>
        <position position="1"/>
    </location>
</feature>
<feature type="chain" id="PRO_0000170837" description="Formamidopyrimidine-DNA glycosylase">
    <location>
        <begin position="2"/>
        <end position="277"/>
    </location>
</feature>
<feature type="zinc finger region" description="FPG-type">
    <location>
        <begin position="241"/>
        <end position="275"/>
    </location>
</feature>
<feature type="active site" description="Schiff-base intermediate with DNA" evidence="1">
    <location>
        <position position="2"/>
    </location>
</feature>
<feature type="active site" description="Proton donor" evidence="1">
    <location>
        <position position="3"/>
    </location>
</feature>
<feature type="active site" description="Proton donor; for beta-elimination activity" evidence="1">
    <location>
        <position position="59"/>
    </location>
</feature>
<feature type="active site" description="Proton donor; for delta-elimination activity" evidence="1">
    <location>
        <position position="265"/>
    </location>
</feature>
<feature type="binding site" evidence="1">
    <location>
        <position position="94"/>
    </location>
    <ligand>
        <name>DNA</name>
        <dbReference type="ChEBI" id="CHEBI:16991"/>
    </ligand>
</feature>
<feature type="binding site" evidence="1">
    <location>
        <position position="113"/>
    </location>
    <ligand>
        <name>DNA</name>
        <dbReference type="ChEBI" id="CHEBI:16991"/>
    </ligand>
</feature>
<protein>
    <recommendedName>
        <fullName>Formamidopyrimidine-DNA glycosylase</fullName>
        <shortName>Fapy-DNA glycosylase</shortName>
        <ecNumber>3.2.2.23</ecNumber>
    </recommendedName>
    <alternativeName>
        <fullName>DNA-(apurinic or apyrimidinic site) lyase MutM</fullName>
        <shortName>AP lyase MutM</shortName>
        <ecNumber>4.2.99.18</ecNumber>
    </alternativeName>
</protein>
<evidence type="ECO:0000250" key="1"/>
<evidence type="ECO:0000305" key="2"/>
<dbReference type="EC" id="3.2.2.23"/>
<dbReference type="EC" id="4.2.99.18"/>
<dbReference type="EMBL" id="U00089">
    <property type="protein sequence ID" value="AAB96105.1"/>
    <property type="molecule type" value="Genomic_DNA"/>
</dbReference>
<dbReference type="PIR" id="S73783">
    <property type="entry name" value="S73783"/>
</dbReference>
<dbReference type="RefSeq" id="NP_110068.1">
    <property type="nucleotide sequence ID" value="NC_000912.1"/>
</dbReference>
<dbReference type="RefSeq" id="WP_010874736.1">
    <property type="nucleotide sequence ID" value="NZ_OU342337.1"/>
</dbReference>
<dbReference type="SMR" id="P75402"/>
<dbReference type="STRING" id="272634.MPN_380"/>
<dbReference type="EnsemblBacteria" id="AAB96105">
    <property type="protein sequence ID" value="AAB96105"/>
    <property type="gene ID" value="MPN_380"/>
</dbReference>
<dbReference type="GeneID" id="66608962"/>
<dbReference type="KEGG" id="mpn:MPN_380"/>
<dbReference type="PATRIC" id="fig|272634.6.peg.411"/>
<dbReference type="HOGENOM" id="CLU_038423_1_3_14"/>
<dbReference type="OrthoDB" id="9800855at2"/>
<dbReference type="BioCyc" id="MPNE272634:G1GJ3-602-MONOMER"/>
<dbReference type="Proteomes" id="UP000000808">
    <property type="component" value="Chromosome"/>
</dbReference>
<dbReference type="GO" id="GO:0034039">
    <property type="term" value="F:8-oxo-7,8-dihydroguanine DNA N-glycosylase activity"/>
    <property type="evidence" value="ECO:0007669"/>
    <property type="project" value="TreeGrafter"/>
</dbReference>
<dbReference type="GO" id="GO:0140078">
    <property type="term" value="F:class I DNA-(apurinic or apyrimidinic site) endonuclease activity"/>
    <property type="evidence" value="ECO:0007669"/>
    <property type="project" value="UniProtKB-EC"/>
</dbReference>
<dbReference type="GO" id="GO:0003684">
    <property type="term" value="F:damaged DNA binding"/>
    <property type="evidence" value="ECO:0007669"/>
    <property type="project" value="InterPro"/>
</dbReference>
<dbReference type="GO" id="GO:0008270">
    <property type="term" value="F:zinc ion binding"/>
    <property type="evidence" value="ECO:0007669"/>
    <property type="project" value="UniProtKB-UniRule"/>
</dbReference>
<dbReference type="GO" id="GO:0006284">
    <property type="term" value="P:base-excision repair"/>
    <property type="evidence" value="ECO:0007669"/>
    <property type="project" value="InterPro"/>
</dbReference>
<dbReference type="CDD" id="cd08966">
    <property type="entry name" value="EcFpg-like_N"/>
    <property type="match status" value="1"/>
</dbReference>
<dbReference type="FunFam" id="1.10.8.50:FF:000003">
    <property type="entry name" value="Formamidopyrimidine-DNA glycosylase"/>
    <property type="match status" value="1"/>
</dbReference>
<dbReference type="Gene3D" id="1.10.8.50">
    <property type="match status" value="1"/>
</dbReference>
<dbReference type="Gene3D" id="3.20.190.10">
    <property type="entry name" value="MutM-like, N-terminal"/>
    <property type="match status" value="1"/>
</dbReference>
<dbReference type="HAMAP" id="MF_00103">
    <property type="entry name" value="Fapy_DNA_glycosyl"/>
    <property type="match status" value="1"/>
</dbReference>
<dbReference type="InterPro" id="IPR015886">
    <property type="entry name" value="DNA_glyclase/AP_lyase_DNA-bd"/>
</dbReference>
<dbReference type="InterPro" id="IPR015887">
    <property type="entry name" value="DNA_glyclase_Znf_dom_DNA_BS"/>
</dbReference>
<dbReference type="InterPro" id="IPR020629">
    <property type="entry name" value="Formamido-pyr_DNA_Glyclase"/>
</dbReference>
<dbReference type="InterPro" id="IPR012319">
    <property type="entry name" value="FPG_cat"/>
</dbReference>
<dbReference type="InterPro" id="IPR035937">
    <property type="entry name" value="MutM-like_N-ter"/>
</dbReference>
<dbReference type="InterPro" id="IPR010979">
    <property type="entry name" value="Ribosomal_uS13-like_H2TH"/>
</dbReference>
<dbReference type="InterPro" id="IPR000214">
    <property type="entry name" value="Znf_DNA_glyclase/AP_lyase"/>
</dbReference>
<dbReference type="NCBIfam" id="TIGR00577">
    <property type="entry name" value="fpg"/>
    <property type="match status" value="1"/>
</dbReference>
<dbReference type="NCBIfam" id="NF002211">
    <property type="entry name" value="PRK01103.1"/>
    <property type="match status" value="1"/>
</dbReference>
<dbReference type="PANTHER" id="PTHR22993">
    <property type="entry name" value="FORMAMIDOPYRIMIDINE-DNA GLYCOSYLASE"/>
    <property type="match status" value="1"/>
</dbReference>
<dbReference type="PANTHER" id="PTHR22993:SF9">
    <property type="entry name" value="FORMAMIDOPYRIMIDINE-DNA GLYCOSYLASE"/>
    <property type="match status" value="1"/>
</dbReference>
<dbReference type="Pfam" id="PF01149">
    <property type="entry name" value="Fapy_DNA_glyco"/>
    <property type="match status" value="1"/>
</dbReference>
<dbReference type="Pfam" id="PF06831">
    <property type="entry name" value="H2TH"/>
    <property type="match status" value="1"/>
</dbReference>
<dbReference type="SMART" id="SM00898">
    <property type="entry name" value="Fapy_DNA_glyco"/>
    <property type="match status" value="1"/>
</dbReference>
<dbReference type="SMART" id="SM01232">
    <property type="entry name" value="H2TH"/>
    <property type="match status" value="1"/>
</dbReference>
<dbReference type="SUPFAM" id="SSF57716">
    <property type="entry name" value="Glucocorticoid receptor-like (DNA-binding domain)"/>
    <property type="match status" value="1"/>
</dbReference>
<dbReference type="SUPFAM" id="SSF81624">
    <property type="entry name" value="N-terminal domain of MutM-like DNA repair proteins"/>
    <property type="match status" value="1"/>
</dbReference>
<dbReference type="SUPFAM" id="SSF46946">
    <property type="entry name" value="S13-like H2TH domain"/>
    <property type="match status" value="1"/>
</dbReference>
<dbReference type="PROSITE" id="PS51068">
    <property type="entry name" value="FPG_CAT"/>
    <property type="match status" value="1"/>
</dbReference>
<dbReference type="PROSITE" id="PS01242">
    <property type="entry name" value="ZF_FPG_1"/>
    <property type="match status" value="1"/>
</dbReference>
<dbReference type="PROSITE" id="PS51066">
    <property type="entry name" value="ZF_FPG_2"/>
    <property type="match status" value="1"/>
</dbReference>